<protein>
    <recommendedName>
        <fullName evidence="1">DNA ligase B</fullName>
        <ecNumber evidence="1">6.5.1.2</ecNumber>
    </recommendedName>
    <alternativeName>
        <fullName evidence="1">Polydeoxyribonucleotide synthase [NAD(+)] B</fullName>
    </alternativeName>
</protein>
<evidence type="ECO:0000255" key="1">
    <source>
        <dbReference type="HAMAP-Rule" id="MF_01587"/>
    </source>
</evidence>
<keyword id="KW-0227">DNA damage</keyword>
<keyword id="KW-0234">DNA repair</keyword>
<keyword id="KW-0235">DNA replication</keyword>
<keyword id="KW-0436">Ligase</keyword>
<keyword id="KW-0520">NAD</keyword>
<accession>B2JYM4</accession>
<feature type="chain" id="PRO_1000147734" description="DNA ligase B">
    <location>
        <begin position="1"/>
        <end position="567"/>
    </location>
</feature>
<feature type="active site" description="N6-AMP-lysine intermediate" evidence="1">
    <location>
        <position position="132"/>
    </location>
</feature>
<organism>
    <name type="scientific">Yersinia pseudotuberculosis serotype IB (strain PB1/+)</name>
    <dbReference type="NCBI Taxonomy" id="502801"/>
    <lineage>
        <taxon>Bacteria</taxon>
        <taxon>Pseudomonadati</taxon>
        <taxon>Pseudomonadota</taxon>
        <taxon>Gammaproteobacteria</taxon>
        <taxon>Enterobacterales</taxon>
        <taxon>Yersiniaceae</taxon>
        <taxon>Yersinia</taxon>
    </lineage>
</organism>
<comment type="function">
    <text evidence="1">Catalyzes the formation of phosphodiester linkages between 5'-phosphoryl and 3'-hydroxyl groups in double-stranded DNA using NAD as a coenzyme and as the energy source for the reaction.</text>
</comment>
<comment type="catalytic activity">
    <reaction evidence="1">
        <text>NAD(+) + (deoxyribonucleotide)n-3'-hydroxyl + 5'-phospho-(deoxyribonucleotide)m = (deoxyribonucleotide)n+m + AMP + beta-nicotinamide D-nucleotide.</text>
        <dbReference type="EC" id="6.5.1.2"/>
    </reaction>
</comment>
<comment type="similarity">
    <text evidence="1">Belongs to the NAD-dependent DNA ligase family. LigB subfamily.</text>
</comment>
<gene>
    <name evidence="1" type="primary">ligB</name>
    <name type="ordered locus">YPTS_0039</name>
</gene>
<sequence length="567" mass="63623">MNILNLKIIMFLLISNIIVVGGAWATSTCPDWPATRIAVEINALEQQLNKWSAAYHQQGHSPVTDDIYDQLQDKLRVWQSCRGLPDKTESQPIPGKGQFLHPVAHTGLKKLKDETALTRWMAGRKNLWVQPKVDGVAVTLVYHGGKLVQLLSRGNGVKGQNWTEKAPFISAIPQYIANAPALLTLQGELFLLMDGHQQAKSGGVNARSTVAGALMRKSPSPLLAQVGVFIWAWPDGPTTMKEKVALLQVMGFPFTAKYSEPVMSHLDVVQWRQFWFQAPLPFVTDGVVVRQEEEPAGRYWQATPGQWSMAWKYPPLQHIAEVKDIHFTLGRTGKGTVVLEVLPIKIDDKWIRRVNIGSVTRWKQWDIAPGDHITLALAGHGIPRLDNVVWRVHQRNTITAPNWDKFHQLSCFQRLPHGCEPQFLSRLIWLSGPGGLDIGGIGGGFWQKLIHHELINDLVGWLLLTPEQIASIPGIGNARAEKIYQQFQRAKQQPFSRWLLALGFPQVVSVDAQWQVVLRRSLSEWATMAGIGQMRAKQIKHFLDHPDVQALADFLSTQKVVGFELTE</sequence>
<proteinExistence type="inferred from homology"/>
<name>LIGB_YERPB</name>
<reference key="1">
    <citation type="submission" date="2008-04" db="EMBL/GenBank/DDBJ databases">
        <title>Complete sequence of Yersinia pseudotuberculosis PB1/+.</title>
        <authorList>
            <person name="Copeland A."/>
            <person name="Lucas S."/>
            <person name="Lapidus A."/>
            <person name="Glavina del Rio T."/>
            <person name="Dalin E."/>
            <person name="Tice H."/>
            <person name="Bruce D."/>
            <person name="Goodwin L."/>
            <person name="Pitluck S."/>
            <person name="Munk A.C."/>
            <person name="Brettin T."/>
            <person name="Detter J.C."/>
            <person name="Han C."/>
            <person name="Tapia R."/>
            <person name="Schmutz J."/>
            <person name="Larimer F."/>
            <person name="Land M."/>
            <person name="Hauser L."/>
            <person name="Challacombe J.F."/>
            <person name="Green L."/>
            <person name="Lindler L.E."/>
            <person name="Nikolich M.P."/>
            <person name="Richardson P."/>
        </authorList>
    </citation>
    <scope>NUCLEOTIDE SEQUENCE [LARGE SCALE GENOMIC DNA]</scope>
    <source>
        <strain>PB1/+</strain>
    </source>
</reference>
<dbReference type="EC" id="6.5.1.2" evidence="1"/>
<dbReference type="EMBL" id="CP001048">
    <property type="protein sequence ID" value="ACC87038.1"/>
    <property type="molecule type" value="Genomic_DNA"/>
</dbReference>
<dbReference type="RefSeq" id="WP_011191447.1">
    <property type="nucleotide sequence ID" value="NZ_CP009780.1"/>
</dbReference>
<dbReference type="SMR" id="B2JYM4"/>
<dbReference type="KEGG" id="ypb:YPTS_0039"/>
<dbReference type="PATRIC" id="fig|502801.10.peg.3716"/>
<dbReference type="GO" id="GO:0003911">
    <property type="term" value="F:DNA ligase (NAD+) activity"/>
    <property type="evidence" value="ECO:0007669"/>
    <property type="project" value="UniProtKB-UniRule"/>
</dbReference>
<dbReference type="GO" id="GO:0006281">
    <property type="term" value="P:DNA repair"/>
    <property type="evidence" value="ECO:0007669"/>
    <property type="project" value="UniProtKB-KW"/>
</dbReference>
<dbReference type="GO" id="GO:0006260">
    <property type="term" value="P:DNA replication"/>
    <property type="evidence" value="ECO:0007669"/>
    <property type="project" value="UniProtKB-KW"/>
</dbReference>
<dbReference type="CDD" id="cd00114">
    <property type="entry name" value="LIGANc"/>
    <property type="match status" value="1"/>
</dbReference>
<dbReference type="FunFam" id="2.40.50.140:FF:000139">
    <property type="entry name" value="DNA ligase B"/>
    <property type="match status" value="1"/>
</dbReference>
<dbReference type="FunFam" id="3.30.470.30:FF:000007">
    <property type="entry name" value="DNA ligase B"/>
    <property type="match status" value="1"/>
</dbReference>
<dbReference type="Gene3D" id="1.10.150.20">
    <property type="entry name" value="5' to 3' exonuclease, C-terminal subdomain"/>
    <property type="match status" value="1"/>
</dbReference>
<dbReference type="Gene3D" id="3.30.470.30">
    <property type="entry name" value="DNA ligase/mRNA capping enzyme"/>
    <property type="match status" value="1"/>
</dbReference>
<dbReference type="Gene3D" id="1.10.287.610">
    <property type="entry name" value="Helix hairpin bin"/>
    <property type="match status" value="1"/>
</dbReference>
<dbReference type="Gene3D" id="2.40.50.140">
    <property type="entry name" value="Nucleic acid-binding proteins"/>
    <property type="match status" value="1"/>
</dbReference>
<dbReference type="HAMAP" id="MF_01587">
    <property type="entry name" value="DNA_ligase_B"/>
    <property type="match status" value="1"/>
</dbReference>
<dbReference type="InterPro" id="IPR020923">
    <property type="entry name" value="DNA_ligase_B"/>
</dbReference>
<dbReference type="InterPro" id="IPR013839">
    <property type="entry name" value="DNAligase_adenylation"/>
</dbReference>
<dbReference type="InterPro" id="IPR013840">
    <property type="entry name" value="DNAligase_N"/>
</dbReference>
<dbReference type="InterPro" id="IPR012340">
    <property type="entry name" value="NA-bd_OB-fold"/>
</dbReference>
<dbReference type="InterPro" id="IPR050326">
    <property type="entry name" value="NAD_dep_DNA_ligaseB"/>
</dbReference>
<dbReference type="InterPro" id="IPR004150">
    <property type="entry name" value="NAD_DNA_ligase_OB"/>
</dbReference>
<dbReference type="InterPro" id="IPR010994">
    <property type="entry name" value="RuvA_2-like"/>
</dbReference>
<dbReference type="NCBIfam" id="NF005987">
    <property type="entry name" value="PRK08097.1"/>
    <property type="match status" value="1"/>
</dbReference>
<dbReference type="PANTHER" id="PTHR47810">
    <property type="entry name" value="DNA LIGASE"/>
    <property type="match status" value="1"/>
</dbReference>
<dbReference type="PANTHER" id="PTHR47810:SF1">
    <property type="entry name" value="DNA LIGASE B"/>
    <property type="match status" value="1"/>
</dbReference>
<dbReference type="Pfam" id="PF01653">
    <property type="entry name" value="DNA_ligase_aden"/>
    <property type="match status" value="1"/>
</dbReference>
<dbReference type="Pfam" id="PF03120">
    <property type="entry name" value="DNA_ligase_OB"/>
    <property type="match status" value="1"/>
</dbReference>
<dbReference type="SMART" id="SM00532">
    <property type="entry name" value="LIGANc"/>
    <property type="match status" value="1"/>
</dbReference>
<dbReference type="SUPFAM" id="SSF56091">
    <property type="entry name" value="DNA ligase/mRNA capping enzyme, catalytic domain"/>
    <property type="match status" value="1"/>
</dbReference>
<dbReference type="SUPFAM" id="SSF50249">
    <property type="entry name" value="Nucleic acid-binding proteins"/>
    <property type="match status" value="1"/>
</dbReference>
<dbReference type="SUPFAM" id="SSF47781">
    <property type="entry name" value="RuvA domain 2-like"/>
    <property type="match status" value="1"/>
</dbReference>